<name>FEN1_DROSI</name>
<feature type="chain" id="PRO_0000403505" description="Flap endonuclease 1">
    <location>
        <begin position="1"/>
        <end position="385"/>
    </location>
</feature>
<feature type="region of interest" description="N-domain">
    <location>
        <begin position="1"/>
        <end position="104"/>
    </location>
</feature>
<feature type="region of interest" description="I-domain">
    <location>
        <begin position="122"/>
        <end position="253"/>
    </location>
</feature>
<feature type="region of interest" description="Interaction with PCNA" evidence="1">
    <location>
        <begin position="336"/>
        <end position="344"/>
    </location>
</feature>
<feature type="region of interest" description="Disordered" evidence="2">
    <location>
        <begin position="346"/>
        <end position="385"/>
    </location>
</feature>
<feature type="compositionally biased region" description="Basic residues" evidence="2">
    <location>
        <begin position="368"/>
        <end position="385"/>
    </location>
</feature>
<feature type="binding site" evidence="1">
    <location>
        <position position="34"/>
    </location>
    <ligand>
        <name>Mg(2+)</name>
        <dbReference type="ChEBI" id="CHEBI:18420"/>
        <label>1</label>
    </ligand>
</feature>
<feature type="binding site" evidence="1">
    <location>
        <position position="47"/>
    </location>
    <ligand>
        <name>DNA</name>
        <dbReference type="ChEBI" id="CHEBI:16991"/>
    </ligand>
</feature>
<feature type="binding site" evidence="1">
    <location>
        <position position="70"/>
    </location>
    <ligand>
        <name>DNA</name>
        <dbReference type="ChEBI" id="CHEBI:16991"/>
    </ligand>
</feature>
<feature type="binding site" evidence="1">
    <location>
        <position position="86"/>
    </location>
    <ligand>
        <name>Mg(2+)</name>
        <dbReference type="ChEBI" id="CHEBI:18420"/>
        <label>1</label>
    </ligand>
</feature>
<feature type="binding site" evidence="1">
    <location>
        <position position="158"/>
    </location>
    <ligand>
        <name>DNA</name>
        <dbReference type="ChEBI" id="CHEBI:16991"/>
    </ligand>
</feature>
<feature type="binding site" evidence="1">
    <location>
        <position position="158"/>
    </location>
    <ligand>
        <name>Mg(2+)</name>
        <dbReference type="ChEBI" id="CHEBI:18420"/>
        <label>1</label>
    </ligand>
</feature>
<feature type="binding site" evidence="1">
    <location>
        <position position="160"/>
    </location>
    <ligand>
        <name>Mg(2+)</name>
        <dbReference type="ChEBI" id="CHEBI:18420"/>
        <label>1</label>
    </ligand>
</feature>
<feature type="binding site" evidence="1">
    <location>
        <position position="179"/>
    </location>
    <ligand>
        <name>Mg(2+)</name>
        <dbReference type="ChEBI" id="CHEBI:18420"/>
        <label>2</label>
    </ligand>
</feature>
<feature type="binding site" evidence="1">
    <location>
        <position position="181"/>
    </location>
    <ligand>
        <name>Mg(2+)</name>
        <dbReference type="ChEBI" id="CHEBI:18420"/>
        <label>2</label>
    </ligand>
</feature>
<feature type="binding site" evidence="1">
    <location>
        <position position="231"/>
    </location>
    <ligand>
        <name>DNA</name>
        <dbReference type="ChEBI" id="CHEBI:16991"/>
    </ligand>
</feature>
<feature type="binding site" evidence="1">
    <location>
        <position position="233"/>
    </location>
    <ligand>
        <name>DNA</name>
        <dbReference type="ChEBI" id="CHEBI:16991"/>
    </ligand>
</feature>
<feature type="binding site" evidence="1">
    <location>
        <position position="233"/>
    </location>
    <ligand>
        <name>Mg(2+)</name>
        <dbReference type="ChEBI" id="CHEBI:18420"/>
        <label>2</label>
    </ligand>
</feature>
<sequence>MGILGLSKLIADLAPQAIRESEMKHFFGRKVAIDASMCLYQFLIAVRSEGAQLATVNGDPTSHLMGMFYRTIRLLDNGIKPVYVFDGKPPDLKSGELAKRAERREEAEKALKAATDAGDDAGIEKFNRRLVRVTKEHAKEAKELLTLMGVPYVDAPCEAEAQCAALVKAGKVYATATEDMDALTFGSTKLLRYLTYSEARKMPVKEFSYDKLLEGLAINNREFIDLCILLGCDYCESIKGIGPKRAIELINTYRDIETILDNLDSSKYTVPENWNYKVARELFIEPEVANADSIDLKWVEPDEEGLVKFLCGDRQFNEERVRNGAKKLMKSKQAQTQVRLDSFFKTLPSTPNATNAAKRKAEEAKKSANNKKAKTSGGGRGRRPK</sequence>
<keyword id="KW-0227">DNA damage</keyword>
<keyword id="KW-0234">DNA repair</keyword>
<keyword id="KW-0235">DNA replication</keyword>
<keyword id="KW-0255">Endonuclease</keyword>
<keyword id="KW-0269">Exonuclease</keyword>
<keyword id="KW-0378">Hydrolase</keyword>
<keyword id="KW-0460">Magnesium</keyword>
<keyword id="KW-0479">Metal-binding</keyword>
<keyword id="KW-0496">Mitochondrion</keyword>
<keyword id="KW-0540">Nuclease</keyword>
<keyword id="KW-0539">Nucleus</keyword>
<keyword id="KW-0597">Phosphoprotein</keyword>
<keyword id="KW-1185">Reference proteome</keyword>
<evidence type="ECO:0000255" key="1">
    <source>
        <dbReference type="HAMAP-Rule" id="MF_03140"/>
    </source>
</evidence>
<evidence type="ECO:0000256" key="2">
    <source>
        <dbReference type="SAM" id="MobiDB-lite"/>
    </source>
</evidence>
<reference key="1">
    <citation type="journal article" date="2007" name="Nature">
        <title>Evolution of genes and genomes on the Drosophila phylogeny.</title>
        <authorList>
            <consortium name="Drosophila 12 genomes consortium"/>
        </authorList>
    </citation>
    <scope>NUCLEOTIDE SEQUENCE [LARGE SCALE GENOMIC DNA]</scope>
</reference>
<proteinExistence type="inferred from homology"/>
<comment type="function">
    <text evidence="1">Structure-specific nuclease with 5'-flap endonuclease and 5'-3' exonuclease activities involved in DNA replication and repair. During DNA replication, cleaves the 5'-overhanging flap structure that is generated by displacement synthesis when DNA polymerase encounters the 5'-end of a downstream Okazaki fragment. It enters the flap from the 5'-end and then tracks to cleave the flap base, leaving a nick for ligation. Also involved in the long patch base excision repair (LP-BER) pathway, by cleaving within the apurinic/apyrimidinic (AP) site-terminated flap. Acts as a genome stabilization factor that prevents flaps from equilibrating into structures that lead to duplications and deletions. Also possesses 5'-3' exonuclease activity on nicked or gapped double-stranded DNA, and exhibits RNase H activity. Also involved in replication and repair of rDNA and in repairing mitochondrial DNA.</text>
</comment>
<comment type="cofactor">
    <cofactor evidence="1">
        <name>Mg(2+)</name>
        <dbReference type="ChEBI" id="CHEBI:18420"/>
    </cofactor>
    <text evidence="1">Binds 2 magnesium ions per subunit. They probably participate in the reaction catalyzed by the enzyme. May bind an additional third magnesium ion after substrate binding.</text>
</comment>
<comment type="subunit">
    <text evidence="1">Interacts with PCNA. Three molecules of FEN1 bind to one PCNA trimer with each molecule binding to one PCNA monomer. PCNA stimulates the nuclease activity without altering cleavage specificity.</text>
</comment>
<comment type="subcellular location">
    <subcellularLocation>
        <location evidence="1">Nucleus</location>
        <location evidence="1">Nucleolus</location>
    </subcellularLocation>
    <subcellularLocation>
        <location evidence="1">Nucleus</location>
        <location evidence="1">Nucleoplasm</location>
    </subcellularLocation>
    <subcellularLocation>
        <location evidence="1">Mitochondrion</location>
    </subcellularLocation>
    <text evidence="1">Resides mostly in the nucleoli and relocalizes to the nucleoplasm upon DNA damage.</text>
</comment>
<comment type="PTM">
    <text evidence="1">Phosphorylated. Phosphorylation upon DNA damage induces relocalization to the nuclear plasma.</text>
</comment>
<comment type="similarity">
    <text evidence="1">Belongs to the XPG/RAD2 endonuclease family. FEN1 subfamily.</text>
</comment>
<organism>
    <name type="scientific">Drosophila simulans</name>
    <name type="common">Fruit fly</name>
    <dbReference type="NCBI Taxonomy" id="7240"/>
    <lineage>
        <taxon>Eukaryota</taxon>
        <taxon>Metazoa</taxon>
        <taxon>Ecdysozoa</taxon>
        <taxon>Arthropoda</taxon>
        <taxon>Hexapoda</taxon>
        <taxon>Insecta</taxon>
        <taxon>Pterygota</taxon>
        <taxon>Neoptera</taxon>
        <taxon>Endopterygota</taxon>
        <taxon>Diptera</taxon>
        <taxon>Brachycera</taxon>
        <taxon>Muscomorpha</taxon>
        <taxon>Ephydroidea</taxon>
        <taxon>Drosophilidae</taxon>
        <taxon>Drosophila</taxon>
        <taxon>Sophophora</taxon>
    </lineage>
</organism>
<dbReference type="EC" id="3.1.-.-" evidence="1"/>
<dbReference type="EMBL" id="CM000362">
    <property type="protein sequence ID" value="EDX07413.1"/>
    <property type="molecule type" value="Genomic_DNA"/>
</dbReference>
<dbReference type="SMR" id="B4QIG6"/>
<dbReference type="STRING" id="7240.B4QIG6"/>
<dbReference type="EnsemblMetazoa" id="FBtr0225422">
    <property type="protein sequence ID" value="FBpp0223914"/>
    <property type="gene ID" value="FBgn0196803"/>
</dbReference>
<dbReference type="EnsemblMetazoa" id="XM_002081792.4">
    <property type="protein sequence ID" value="XP_002081828.1"/>
    <property type="gene ID" value="LOC6734826"/>
</dbReference>
<dbReference type="GeneID" id="6734826"/>
<dbReference type="CTD" id="2237"/>
<dbReference type="HOGENOM" id="CLU_032444_2_0_1"/>
<dbReference type="OMA" id="MGIPWVQ"/>
<dbReference type="OrthoDB" id="1937206at2759"/>
<dbReference type="PhylomeDB" id="B4QIG6"/>
<dbReference type="Proteomes" id="UP000000304">
    <property type="component" value="Chromosome 2R"/>
</dbReference>
<dbReference type="Bgee" id="FBgn0196803">
    <property type="expression patterns" value="Expressed in embryo and 3 other cell types or tissues"/>
</dbReference>
<dbReference type="GO" id="GO:0005739">
    <property type="term" value="C:mitochondrion"/>
    <property type="evidence" value="ECO:0007669"/>
    <property type="project" value="UniProtKB-SubCell"/>
</dbReference>
<dbReference type="GO" id="GO:0005730">
    <property type="term" value="C:nucleolus"/>
    <property type="evidence" value="ECO:0007669"/>
    <property type="project" value="UniProtKB-SubCell"/>
</dbReference>
<dbReference type="GO" id="GO:0005654">
    <property type="term" value="C:nucleoplasm"/>
    <property type="evidence" value="ECO:0007669"/>
    <property type="project" value="UniProtKB-SubCell"/>
</dbReference>
<dbReference type="GO" id="GO:0008409">
    <property type="term" value="F:5'-3' exonuclease activity"/>
    <property type="evidence" value="ECO:0007669"/>
    <property type="project" value="UniProtKB-UniRule"/>
</dbReference>
<dbReference type="GO" id="GO:0017108">
    <property type="term" value="F:5'-flap endonuclease activity"/>
    <property type="evidence" value="ECO:0007669"/>
    <property type="project" value="UniProtKB-UniRule"/>
</dbReference>
<dbReference type="GO" id="GO:0003677">
    <property type="term" value="F:DNA binding"/>
    <property type="evidence" value="ECO:0007669"/>
    <property type="project" value="UniProtKB-UniRule"/>
</dbReference>
<dbReference type="GO" id="GO:0000287">
    <property type="term" value="F:magnesium ion binding"/>
    <property type="evidence" value="ECO:0007669"/>
    <property type="project" value="UniProtKB-UniRule"/>
</dbReference>
<dbReference type="GO" id="GO:0030145">
    <property type="term" value="F:manganese ion binding"/>
    <property type="evidence" value="ECO:0007669"/>
    <property type="project" value="TreeGrafter"/>
</dbReference>
<dbReference type="GO" id="GO:0004523">
    <property type="term" value="F:RNA-DNA hybrid ribonuclease activity"/>
    <property type="evidence" value="ECO:0007669"/>
    <property type="project" value="TreeGrafter"/>
</dbReference>
<dbReference type="GO" id="GO:0006284">
    <property type="term" value="P:base-excision repair"/>
    <property type="evidence" value="ECO:0007669"/>
    <property type="project" value="UniProtKB-UniRule"/>
</dbReference>
<dbReference type="GO" id="GO:0043137">
    <property type="term" value="P:DNA replication, removal of RNA primer"/>
    <property type="evidence" value="ECO:0007669"/>
    <property type="project" value="UniProtKB-UniRule"/>
</dbReference>
<dbReference type="CDD" id="cd09867">
    <property type="entry name" value="PIN_FEN1"/>
    <property type="match status" value="1"/>
</dbReference>
<dbReference type="FunFam" id="1.10.150.20:FF:000009">
    <property type="entry name" value="Flap endonuclease 1"/>
    <property type="match status" value="1"/>
</dbReference>
<dbReference type="FunFam" id="3.40.50.1010:FF:000003">
    <property type="entry name" value="Flap endonuclease 1"/>
    <property type="match status" value="1"/>
</dbReference>
<dbReference type="Gene3D" id="1.10.150.20">
    <property type="entry name" value="5' to 3' exonuclease, C-terminal subdomain"/>
    <property type="match status" value="1"/>
</dbReference>
<dbReference type="Gene3D" id="3.40.50.1010">
    <property type="entry name" value="5'-nuclease"/>
    <property type="match status" value="1"/>
</dbReference>
<dbReference type="HAMAP" id="MF_00614">
    <property type="entry name" value="Fen"/>
    <property type="match status" value="1"/>
</dbReference>
<dbReference type="InterPro" id="IPR036279">
    <property type="entry name" value="5-3_exonuclease_C_sf"/>
</dbReference>
<dbReference type="InterPro" id="IPR023426">
    <property type="entry name" value="Flap_endonuc"/>
</dbReference>
<dbReference type="InterPro" id="IPR008918">
    <property type="entry name" value="HhH2"/>
</dbReference>
<dbReference type="InterPro" id="IPR029060">
    <property type="entry name" value="PIN-like_dom_sf"/>
</dbReference>
<dbReference type="InterPro" id="IPR006086">
    <property type="entry name" value="XPG-I_dom"/>
</dbReference>
<dbReference type="InterPro" id="IPR006084">
    <property type="entry name" value="XPG/Rad2"/>
</dbReference>
<dbReference type="InterPro" id="IPR019974">
    <property type="entry name" value="XPG_CS"/>
</dbReference>
<dbReference type="InterPro" id="IPR006085">
    <property type="entry name" value="XPG_DNA_repair_N"/>
</dbReference>
<dbReference type="PANTHER" id="PTHR11081:SF9">
    <property type="entry name" value="FLAP ENDONUCLEASE 1"/>
    <property type="match status" value="1"/>
</dbReference>
<dbReference type="PANTHER" id="PTHR11081">
    <property type="entry name" value="FLAP ENDONUCLEASE FAMILY MEMBER"/>
    <property type="match status" value="1"/>
</dbReference>
<dbReference type="Pfam" id="PF00867">
    <property type="entry name" value="XPG_I"/>
    <property type="match status" value="1"/>
</dbReference>
<dbReference type="Pfam" id="PF00752">
    <property type="entry name" value="XPG_N"/>
    <property type="match status" value="1"/>
</dbReference>
<dbReference type="PRINTS" id="PR00853">
    <property type="entry name" value="XPGRADSUPER"/>
</dbReference>
<dbReference type="SMART" id="SM00279">
    <property type="entry name" value="HhH2"/>
    <property type="match status" value="1"/>
</dbReference>
<dbReference type="SMART" id="SM00484">
    <property type="entry name" value="XPGI"/>
    <property type="match status" value="1"/>
</dbReference>
<dbReference type="SMART" id="SM00485">
    <property type="entry name" value="XPGN"/>
    <property type="match status" value="1"/>
</dbReference>
<dbReference type="SUPFAM" id="SSF47807">
    <property type="entry name" value="5' to 3' exonuclease, C-terminal subdomain"/>
    <property type="match status" value="1"/>
</dbReference>
<dbReference type="SUPFAM" id="SSF88723">
    <property type="entry name" value="PIN domain-like"/>
    <property type="match status" value="1"/>
</dbReference>
<dbReference type="PROSITE" id="PS00841">
    <property type="entry name" value="XPG_1"/>
    <property type="match status" value="1"/>
</dbReference>
<dbReference type="PROSITE" id="PS00842">
    <property type="entry name" value="XPG_2"/>
    <property type="match status" value="1"/>
</dbReference>
<gene>
    <name evidence="1" type="primary">Fen1</name>
    <name type="ORF">GD25512</name>
</gene>
<accession>B4QIG6</accession>
<protein>
    <recommendedName>
        <fullName evidence="1">Flap endonuclease 1</fullName>
        <shortName evidence="1">FEN-1</shortName>
        <ecNumber evidence="1">3.1.-.-</ecNumber>
    </recommendedName>
    <alternativeName>
        <fullName evidence="1">Flap structure-specific endonuclease 1</fullName>
    </alternativeName>
</protein>